<evidence type="ECO:0000255" key="1"/>
<evidence type="ECO:0000269" key="2">
    <source>
    </source>
</evidence>
<evidence type="ECO:0000269" key="3">
    <source>
    </source>
</evidence>
<evidence type="ECO:0000303" key="4">
    <source>
    </source>
</evidence>
<evidence type="ECO:0000305" key="5"/>
<evidence type="ECO:0007744" key="6">
    <source>
    </source>
</evidence>
<evidence type="ECO:0007744" key="7">
    <source>
    </source>
</evidence>
<evidence type="ECO:0007744" key="8">
    <source>
    </source>
</evidence>
<evidence type="ECO:0007744" key="9">
    <source>
    </source>
</evidence>
<sequence>MRKELKYLICFNILLLLSIIYYTFDLLTLCIDDTVKDAILEEDLNPDAPPKPQLIPKIIHQTYKTEDIPEHWKEGRQKCLDLHPDYKYILWTDEMAYEFIKEEYPWFLDTFENYKYPIERADAIRYFILSHYGGVYIDLDDGCERKLDPLLAFPAFLRKTSPLGVSNDVMGSVPRHPFFLKALKSLKHYDKYWFIPYMTIMGSTGPLFLSVIWKQYKRWRIPKNGTVRILQPAYYKMHSYSFFSITKGSSWHLDDAKLMKALENHILSCVVTGFIFGFFILYGEFTFYCWLCSKNFSNLTKNWKLNAIKVRFVTILNSLGLRLKLSKSTSDTASATLLARQQKRLRKDSNTNIVLLKSSRKSDVYDLEKNDSSKYSLGNNSS</sequence>
<name>SUR1_YEAST</name>
<comment type="function">
    <text evidence="2 3">Involved in the synthesis of mannosyl phosphorylinositol ceramide (PubMed:12954640, PubMed:9323360). Catalyzes the addition of mannosyl to phosphorylinositol ceramide. Suppressor of RVS161 mutation (PubMed:12954640, PubMed:9323360).</text>
</comment>
<comment type="catalytic activity">
    <reaction evidence="3">
        <text>a 1D-myo-inositol-1-phospho-N-[(R)-2-hydroxy-very-long-chain fatty acyl]-(R)-4-hydroxysphingoid base + GDP-alpha-D-mannose = an alpha-D-mannosyl-(1&lt;-&gt;6)-1D-myo-inositol-1-phospho-N-[(R)-2-hydroxy-very-long-chain fatty acyl]-(R)-4-hydroxysphingoid base + GDP + H(+)</text>
        <dbReference type="Rhea" id="RHEA:64596"/>
        <dbReference type="ChEBI" id="CHEBI:15378"/>
        <dbReference type="ChEBI" id="CHEBI:57527"/>
        <dbReference type="ChEBI" id="CHEBI:58189"/>
        <dbReference type="ChEBI" id="CHEBI:155885"/>
        <dbReference type="ChEBI" id="CHEBI:155926"/>
        <dbReference type="EC" id="2.4.1.370"/>
    </reaction>
    <physiologicalReaction direction="left-to-right" evidence="3">
        <dbReference type="Rhea" id="RHEA:64597"/>
    </physiologicalReaction>
</comment>
<comment type="subunit">
    <text evidence="2">Heterodimer of SUR1 and CSG2.</text>
</comment>
<comment type="interaction">
    <interactant intactId="EBI-18569">
        <id>P33300</id>
    </interactant>
    <interactant intactId="EBI-2051140">
        <id>P35206</id>
        <label>CSG2</label>
    </interactant>
    <organismsDiffer>false</organismsDiffer>
    <experiments>2</experiments>
</comment>
<comment type="subcellular location">
    <subcellularLocation>
        <location evidence="5">Membrane</location>
        <topology evidence="5">Multi-pass membrane protein</topology>
    </subcellularLocation>
</comment>
<comment type="disruption phenotype">
    <text evidence="3">Leads to altered sphingolipid synthesis.</text>
</comment>
<comment type="similarity">
    <text evidence="5">Belongs to the glycosyltransferase 32 family.</text>
</comment>
<feature type="chain" id="PRO_0000072314" description="Mannosyl phosphorylinositol ceramide synthase SUR1">
    <location>
        <begin position="1"/>
        <end position="382"/>
    </location>
</feature>
<feature type="topological domain" description="Cytoplasmic" evidence="1">
    <location>
        <begin position="1"/>
        <end position="6"/>
    </location>
</feature>
<feature type="transmembrane region" description="Helical" evidence="1">
    <location>
        <begin position="7"/>
        <end position="27"/>
    </location>
</feature>
<feature type="topological domain" description="Extracellular" evidence="1">
    <location>
        <begin position="28"/>
        <end position="269"/>
    </location>
</feature>
<feature type="transmembrane region" description="Helical" evidence="1">
    <location>
        <begin position="270"/>
        <end position="290"/>
    </location>
</feature>
<feature type="topological domain" description="Cytoplasmic" evidence="1">
    <location>
        <begin position="291"/>
        <end position="382"/>
    </location>
</feature>
<feature type="modified residue" description="Phosphoserine" evidence="6 7 8 9">
    <location>
        <position position="349"/>
    </location>
</feature>
<protein>
    <recommendedName>
        <fullName evidence="4">Mannosyl phosphorylinositol ceramide synthase SUR1</fullName>
        <ecNumber evidence="3">2.4.1.370</ecNumber>
    </recommendedName>
</protein>
<gene>
    <name evidence="4" type="primary">SUR1</name>
    <name type="synonym">BCL21</name>
    <name type="synonym">CSG1</name>
    <name type="synonym">LPE15</name>
    <name type="ordered locus">YPL057C</name>
</gene>
<proteinExistence type="evidence at protein level"/>
<organism>
    <name type="scientific">Saccharomyces cerevisiae (strain ATCC 204508 / S288c)</name>
    <name type="common">Baker's yeast</name>
    <dbReference type="NCBI Taxonomy" id="559292"/>
    <lineage>
        <taxon>Eukaryota</taxon>
        <taxon>Fungi</taxon>
        <taxon>Dikarya</taxon>
        <taxon>Ascomycota</taxon>
        <taxon>Saccharomycotina</taxon>
        <taxon>Saccharomycetes</taxon>
        <taxon>Saccharomycetales</taxon>
        <taxon>Saccharomycetaceae</taxon>
        <taxon>Saccharomyces</taxon>
    </lineage>
</organism>
<keyword id="KW-0328">Glycosyltransferase</keyword>
<keyword id="KW-0472">Membrane</keyword>
<keyword id="KW-0597">Phosphoprotein</keyword>
<keyword id="KW-1185">Reference proteome</keyword>
<keyword id="KW-0808">Transferase</keyword>
<keyword id="KW-0812">Transmembrane</keyword>
<keyword id="KW-1133">Transmembrane helix</keyword>
<accession>P33300</accession>
<accession>D6W3V7</accession>
<reference key="1">
    <citation type="journal article" date="1993" name="Yeast">
        <title>Yeast mutants affected in viability upon starvation have a modified phospholipid composition.</title>
        <authorList>
            <person name="Desfarges L."/>
            <person name="Durrens P."/>
            <person name="Juguelin H."/>
            <person name="Cassagne C."/>
            <person name="Bonneu M."/>
            <person name="Aigle M."/>
        </authorList>
    </citation>
    <scope>NUCLEOTIDE SEQUENCE [GENOMIC DNA]</scope>
    <source>
        <strain>ATCC 44827 / SKQ2N</strain>
    </source>
</reference>
<reference key="2">
    <citation type="journal article" date="1995" name="Mol. Gen. Genet.">
        <title>The CLS2 gene encodes a protein with multiple membrane-spanning domains that is important Ca2+ tolerance in yeast.</title>
        <authorList>
            <person name="Takita Y."/>
            <person name="Ohya Y."/>
            <person name="Anraku Y."/>
        </authorList>
    </citation>
    <scope>NUCLEOTIDE SEQUENCE [GENOMIC DNA]</scope>
    <source>
        <strain>ATCC 26786 / X2180-1A</strain>
    </source>
</reference>
<reference key="3">
    <citation type="journal article" date="1997" name="Nature">
        <title>The nucleotide sequence of Saccharomyces cerevisiae chromosome XVI.</title>
        <authorList>
            <person name="Bussey H."/>
            <person name="Storms R.K."/>
            <person name="Ahmed A."/>
            <person name="Albermann K."/>
            <person name="Allen E."/>
            <person name="Ansorge W."/>
            <person name="Araujo R."/>
            <person name="Aparicio A."/>
            <person name="Barrell B.G."/>
            <person name="Badcock K."/>
            <person name="Benes V."/>
            <person name="Botstein D."/>
            <person name="Bowman S."/>
            <person name="Brueckner M."/>
            <person name="Carpenter J."/>
            <person name="Cherry J.M."/>
            <person name="Chung E."/>
            <person name="Churcher C.M."/>
            <person name="Coster F."/>
            <person name="Davis K."/>
            <person name="Davis R.W."/>
            <person name="Dietrich F.S."/>
            <person name="Delius H."/>
            <person name="DiPaolo T."/>
            <person name="Dubois E."/>
            <person name="Duesterhoeft A."/>
            <person name="Duncan M."/>
            <person name="Floeth M."/>
            <person name="Fortin N."/>
            <person name="Friesen J.D."/>
            <person name="Fritz C."/>
            <person name="Goffeau A."/>
            <person name="Hall J."/>
            <person name="Hebling U."/>
            <person name="Heumann K."/>
            <person name="Hilbert H."/>
            <person name="Hillier L.W."/>
            <person name="Hunicke-Smith S."/>
            <person name="Hyman R.W."/>
            <person name="Johnston M."/>
            <person name="Kalman S."/>
            <person name="Kleine K."/>
            <person name="Komp C."/>
            <person name="Kurdi O."/>
            <person name="Lashkari D."/>
            <person name="Lew H."/>
            <person name="Lin A."/>
            <person name="Lin D."/>
            <person name="Louis E.J."/>
            <person name="Marathe R."/>
            <person name="Messenguy F."/>
            <person name="Mewes H.-W."/>
            <person name="Mirtipati S."/>
            <person name="Moestl D."/>
            <person name="Mueller-Auer S."/>
            <person name="Namath A."/>
            <person name="Nentwich U."/>
            <person name="Oefner P."/>
            <person name="Pearson D."/>
            <person name="Petel F.X."/>
            <person name="Pohl T.M."/>
            <person name="Purnelle B."/>
            <person name="Rajandream M.A."/>
            <person name="Rechmann S."/>
            <person name="Rieger M."/>
            <person name="Riles L."/>
            <person name="Roberts D."/>
            <person name="Schaefer M."/>
            <person name="Scharfe M."/>
            <person name="Scherens B."/>
            <person name="Schramm S."/>
            <person name="Schroeder M."/>
            <person name="Sdicu A.-M."/>
            <person name="Tettelin H."/>
            <person name="Urrestarazu L.A."/>
            <person name="Ushinsky S."/>
            <person name="Vierendeels F."/>
            <person name="Vissers S."/>
            <person name="Voss H."/>
            <person name="Walsh S.V."/>
            <person name="Wambutt R."/>
            <person name="Wang Y."/>
            <person name="Wedler E."/>
            <person name="Wedler H."/>
            <person name="Winnett E."/>
            <person name="Zhong W.-W."/>
            <person name="Zollner A."/>
            <person name="Vo D.H."/>
            <person name="Hani J."/>
        </authorList>
    </citation>
    <scope>NUCLEOTIDE SEQUENCE [LARGE SCALE GENOMIC DNA]</scope>
    <source>
        <strain>ATCC 204508 / S288c</strain>
    </source>
</reference>
<reference key="4">
    <citation type="journal article" date="2014" name="G3 (Bethesda)">
        <title>The reference genome sequence of Saccharomyces cerevisiae: Then and now.</title>
        <authorList>
            <person name="Engel S.R."/>
            <person name="Dietrich F.S."/>
            <person name="Fisk D.G."/>
            <person name="Binkley G."/>
            <person name="Balakrishnan R."/>
            <person name="Costanzo M.C."/>
            <person name="Dwight S.S."/>
            <person name="Hitz B.C."/>
            <person name="Karra K."/>
            <person name="Nash R.S."/>
            <person name="Weng S."/>
            <person name="Wong E.D."/>
            <person name="Lloyd P."/>
            <person name="Skrzypek M.S."/>
            <person name="Miyasato S.R."/>
            <person name="Simison M."/>
            <person name="Cherry J.M."/>
        </authorList>
    </citation>
    <scope>GENOME REANNOTATION</scope>
    <source>
        <strain>ATCC 204508 / S288c</strain>
    </source>
</reference>
<reference key="5">
    <citation type="journal article" date="1997" name="Mol. Gen. Genet.">
        <title>SUR1 (CSG1/BCL21), a gene necessary for growth of Saccharomyces cerevisiae in the presence of high Ca2+ concentrations at 37 degrees C, is required for mannosylation of inositolphosphorylceramide.</title>
        <authorList>
            <person name="Beeler T.J."/>
            <person name="Fu D."/>
            <person name="Rivera J."/>
            <person name="Monaghan E."/>
            <person name="Gable K."/>
            <person name="Dunn T.M."/>
        </authorList>
    </citation>
    <scope>FUNCTION</scope>
    <scope>DISRUPTION PHENOTYPE</scope>
    <scope>CATALYTIC ACTIVITY</scope>
</reference>
<reference key="6">
    <citation type="journal article" date="2003" name="J. Biol. Chem.">
        <title>Csg1p and newly identified Csh1p function in mannosylinositol phosphorylceramide synthesis by interacting with Csg2p.</title>
        <authorList>
            <person name="Uemura S."/>
            <person name="Kihara A."/>
            <person name="Inokuchi J."/>
            <person name="Igarashi Y."/>
        </authorList>
    </citation>
    <scope>FUNCTION</scope>
    <scope>CATALYTIC ACTIVITY</scope>
    <scope>SUBUNIT</scope>
</reference>
<reference key="7">
    <citation type="journal article" date="2006" name="Proc. Natl. Acad. Sci. U.S.A.">
        <title>A global topology map of the Saccharomyces cerevisiae membrane proteome.</title>
        <authorList>
            <person name="Kim H."/>
            <person name="Melen K."/>
            <person name="Oesterberg M."/>
            <person name="von Heijne G."/>
        </authorList>
    </citation>
    <scope>TOPOLOGY [LARGE SCALE ANALYSIS]</scope>
    <source>
        <strain>ATCC 208353 / W303-1A</strain>
    </source>
</reference>
<reference key="8">
    <citation type="journal article" date="2007" name="J. Proteome Res.">
        <title>Large-scale phosphorylation analysis of alpha-factor-arrested Saccharomyces cerevisiae.</title>
        <authorList>
            <person name="Li X."/>
            <person name="Gerber S.A."/>
            <person name="Rudner A.D."/>
            <person name="Beausoleil S.A."/>
            <person name="Haas W."/>
            <person name="Villen J."/>
            <person name="Elias J.E."/>
            <person name="Gygi S.P."/>
        </authorList>
    </citation>
    <scope>PHOSPHORYLATION [LARGE SCALE ANALYSIS] AT SER-349</scope>
    <scope>IDENTIFICATION BY MASS SPECTROMETRY [LARGE SCALE ANALYSIS]</scope>
    <source>
        <strain>ADR376</strain>
    </source>
</reference>
<reference key="9">
    <citation type="journal article" date="2007" name="Proc. Natl. Acad. Sci. U.S.A.">
        <title>Analysis of phosphorylation sites on proteins from Saccharomyces cerevisiae by electron transfer dissociation (ETD) mass spectrometry.</title>
        <authorList>
            <person name="Chi A."/>
            <person name="Huttenhower C."/>
            <person name="Geer L.Y."/>
            <person name="Coon J.J."/>
            <person name="Syka J.E.P."/>
            <person name="Bai D.L."/>
            <person name="Shabanowitz J."/>
            <person name="Burke D.J."/>
            <person name="Troyanskaya O.G."/>
            <person name="Hunt D.F."/>
        </authorList>
    </citation>
    <scope>PHOSPHORYLATION [LARGE SCALE ANALYSIS] AT SER-349</scope>
    <scope>IDENTIFICATION BY MASS SPECTROMETRY [LARGE SCALE ANALYSIS]</scope>
</reference>
<reference key="10">
    <citation type="journal article" date="2008" name="Mol. Cell. Proteomics">
        <title>A multidimensional chromatography technology for in-depth phosphoproteome analysis.</title>
        <authorList>
            <person name="Albuquerque C.P."/>
            <person name="Smolka M.B."/>
            <person name="Payne S.H."/>
            <person name="Bafna V."/>
            <person name="Eng J."/>
            <person name="Zhou H."/>
        </authorList>
    </citation>
    <scope>PHOSPHORYLATION [LARGE SCALE ANALYSIS] AT SER-349</scope>
    <scope>IDENTIFICATION BY MASS SPECTROMETRY [LARGE SCALE ANALYSIS]</scope>
</reference>
<reference key="11">
    <citation type="journal article" date="2009" name="Science">
        <title>Global analysis of Cdk1 substrate phosphorylation sites provides insights into evolution.</title>
        <authorList>
            <person name="Holt L.J."/>
            <person name="Tuch B.B."/>
            <person name="Villen J."/>
            <person name="Johnson A.D."/>
            <person name="Gygi S.P."/>
            <person name="Morgan D.O."/>
        </authorList>
    </citation>
    <scope>PHOSPHORYLATION [LARGE SCALE ANALYSIS] AT SER-349</scope>
    <scope>IDENTIFICATION BY MASS SPECTROMETRY [LARGE SCALE ANALYSIS]</scope>
</reference>
<dbReference type="EC" id="2.4.1.370" evidence="3"/>
<dbReference type="EMBL" id="M96648">
    <property type="protein sequence ID" value="AAA68909.1"/>
    <property type="molecule type" value="Genomic_DNA"/>
</dbReference>
<dbReference type="EMBL" id="D26581">
    <property type="protein sequence ID" value="BAA05628.1"/>
    <property type="molecule type" value="Genomic_DNA"/>
</dbReference>
<dbReference type="EMBL" id="U39205">
    <property type="protein sequence ID" value="AAB68308.1"/>
    <property type="molecule type" value="Genomic_DNA"/>
</dbReference>
<dbReference type="EMBL" id="BK006949">
    <property type="protein sequence ID" value="DAA11373.1"/>
    <property type="molecule type" value="Genomic_DNA"/>
</dbReference>
<dbReference type="PIR" id="S41798">
    <property type="entry name" value="S41798"/>
</dbReference>
<dbReference type="RefSeq" id="NP_015268.1">
    <property type="nucleotide sequence ID" value="NM_001183871.1"/>
</dbReference>
<dbReference type="SMR" id="P33300"/>
<dbReference type="BioGRID" id="36123">
    <property type="interactions" value="879"/>
</dbReference>
<dbReference type="ComplexPortal" id="CPX-1739">
    <property type="entry name" value="Mannosyl phosphorylinositol ceramide synthase SUR1-CSG2"/>
</dbReference>
<dbReference type="DIP" id="DIP-4557N"/>
<dbReference type="FunCoup" id="P33300">
    <property type="interactions" value="73"/>
</dbReference>
<dbReference type="IntAct" id="P33300">
    <property type="interactions" value="4"/>
</dbReference>
<dbReference type="MINT" id="P33300"/>
<dbReference type="STRING" id="4932.YPL057C"/>
<dbReference type="CAZy" id="GT32">
    <property type="family name" value="Glycosyltransferase Family 32"/>
</dbReference>
<dbReference type="iPTMnet" id="P33300"/>
<dbReference type="PaxDb" id="4932-YPL057C"/>
<dbReference type="PeptideAtlas" id="P33300"/>
<dbReference type="EnsemblFungi" id="YPL057C_mRNA">
    <property type="protein sequence ID" value="YPL057C"/>
    <property type="gene ID" value="YPL057C"/>
</dbReference>
<dbReference type="GeneID" id="856050"/>
<dbReference type="KEGG" id="sce:YPL057C"/>
<dbReference type="AGR" id="SGD:S000005978"/>
<dbReference type="SGD" id="S000005978">
    <property type="gene designation" value="SUR1"/>
</dbReference>
<dbReference type="VEuPathDB" id="FungiDB:YPL057C"/>
<dbReference type="eggNOG" id="ENOG502QS3D">
    <property type="taxonomic scope" value="Eukaryota"/>
</dbReference>
<dbReference type="GeneTree" id="ENSGT00940000176781"/>
<dbReference type="HOGENOM" id="CLU_036369_3_2_1"/>
<dbReference type="InParanoid" id="P33300"/>
<dbReference type="OMA" id="NRHSWSF"/>
<dbReference type="OrthoDB" id="3647at2759"/>
<dbReference type="BioCyc" id="MetaCyc:MONOMER3O-703"/>
<dbReference type="BioCyc" id="YEAST:MONOMER3O-703"/>
<dbReference type="BRENDA" id="2.4.1.370">
    <property type="organism ID" value="984"/>
</dbReference>
<dbReference type="BioGRID-ORCS" id="856050">
    <property type="hits" value="8 hits in 10 CRISPR screens"/>
</dbReference>
<dbReference type="PRO" id="PR:P33300"/>
<dbReference type="Proteomes" id="UP000002311">
    <property type="component" value="Chromosome XVI"/>
</dbReference>
<dbReference type="RNAct" id="P33300">
    <property type="molecule type" value="protein"/>
</dbReference>
<dbReference type="GO" id="GO:0000324">
    <property type="term" value="C:fungal-type vacuole"/>
    <property type="evidence" value="ECO:0007005"/>
    <property type="project" value="SGD"/>
</dbReference>
<dbReference type="GO" id="GO:0000329">
    <property type="term" value="C:fungal-type vacuole membrane"/>
    <property type="evidence" value="ECO:0007005"/>
    <property type="project" value="SGD"/>
</dbReference>
<dbReference type="GO" id="GO:0005794">
    <property type="term" value="C:Golgi apparatus"/>
    <property type="evidence" value="ECO:0000303"/>
    <property type="project" value="ComplexPortal"/>
</dbReference>
<dbReference type="GO" id="GO:0031501">
    <property type="term" value="C:mannosyltransferase complex"/>
    <property type="evidence" value="ECO:0000314"/>
    <property type="project" value="ComplexPortal"/>
</dbReference>
<dbReference type="GO" id="GO:0103064">
    <property type="term" value="F:inositol phosphorylceramide mannosyltransferase activity"/>
    <property type="evidence" value="ECO:0000315"/>
    <property type="project" value="SGD"/>
</dbReference>
<dbReference type="GO" id="GO:0000030">
    <property type="term" value="F:mannosyltransferase activity"/>
    <property type="evidence" value="ECO:0000318"/>
    <property type="project" value="GO_Central"/>
</dbReference>
<dbReference type="GO" id="GO:0006688">
    <property type="term" value="P:glycosphingolipid biosynthetic process"/>
    <property type="evidence" value="ECO:0000315"/>
    <property type="project" value="SGD"/>
</dbReference>
<dbReference type="GO" id="GO:0006676">
    <property type="term" value="P:mannosyl diphosphorylinositol ceramide metabolic process"/>
    <property type="evidence" value="ECO:0000314"/>
    <property type="project" value="ComplexPortal"/>
</dbReference>
<dbReference type="GO" id="GO:0051999">
    <property type="term" value="P:mannosyl-inositol phosphorylceramide biosynthetic process"/>
    <property type="evidence" value="ECO:0000318"/>
    <property type="project" value="GO_Central"/>
</dbReference>
<dbReference type="GO" id="GO:0006675">
    <property type="term" value="P:mannosyl-inositol phosphorylceramide metabolic process"/>
    <property type="evidence" value="ECO:0000315"/>
    <property type="project" value="SGD"/>
</dbReference>
<dbReference type="GO" id="GO:0030148">
    <property type="term" value="P:sphingolipid biosynthetic process"/>
    <property type="evidence" value="ECO:0000315"/>
    <property type="project" value="SGD"/>
</dbReference>
<dbReference type="FunFam" id="3.90.550.20:FF:000001">
    <property type="entry name" value="MIPC synthase subunit (SurA)"/>
    <property type="match status" value="1"/>
</dbReference>
<dbReference type="Gene3D" id="3.90.550.20">
    <property type="match status" value="1"/>
</dbReference>
<dbReference type="InterPro" id="IPR051706">
    <property type="entry name" value="Glycosyltransferase_domain"/>
</dbReference>
<dbReference type="InterPro" id="IPR007577">
    <property type="entry name" value="GlycoTrfase_DXD_sugar-bd_CS"/>
</dbReference>
<dbReference type="InterPro" id="IPR029044">
    <property type="entry name" value="Nucleotide-diphossugar_trans"/>
</dbReference>
<dbReference type="PANTHER" id="PTHR32385">
    <property type="entry name" value="MANNOSYL PHOSPHORYLINOSITOL CERAMIDE SYNTHASE"/>
    <property type="match status" value="1"/>
</dbReference>
<dbReference type="PANTHER" id="PTHR32385:SF20">
    <property type="entry name" value="MANNOSYL PHOSPHORYLINOSITOL CERAMIDE SYNTHASE CSH1-RELATED"/>
    <property type="match status" value="1"/>
</dbReference>
<dbReference type="Pfam" id="PF04488">
    <property type="entry name" value="Gly_transf_sug"/>
    <property type="match status" value="1"/>
</dbReference>
<dbReference type="SUPFAM" id="SSF53448">
    <property type="entry name" value="Nucleotide-diphospho-sugar transferases"/>
    <property type="match status" value="1"/>
</dbReference>